<evidence type="ECO:0000255" key="1">
    <source>
        <dbReference type="HAMAP-Rule" id="MF_00195"/>
    </source>
</evidence>
<feature type="chain" id="PRO_0000179024" description="GTPase Der">
    <location>
        <begin position="1"/>
        <end position="510"/>
    </location>
</feature>
<feature type="domain" description="EngA-type G 1">
    <location>
        <begin position="4"/>
        <end position="168"/>
    </location>
</feature>
<feature type="domain" description="EngA-type G 2">
    <location>
        <begin position="222"/>
        <end position="395"/>
    </location>
</feature>
<feature type="domain" description="KH-like" evidence="1">
    <location>
        <begin position="396"/>
        <end position="480"/>
    </location>
</feature>
<feature type="binding site" evidence="1">
    <location>
        <begin position="10"/>
        <end position="17"/>
    </location>
    <ligand>
        <name>GTP</name>
        <dbReference type="ChEBI" id="CHEBI:37565"/>
        <label>1</label>
    </ligand>
</feature>
<feature type="binding site" evidence="1">
    <location>
        <begin position="57"/>
        <end position="61"/>
    </location>
    <ligand>
        <name>GTP</name>
        <dbReference type="ChEBI" id="CHEBI:37565"/>
        <label>1</label>
    </ligand>
</feature>
<feature type="binding site" evidence="1">
    <location>
        <begin position="120"/>
        <end position="123"/>
    </location>
    <ligand>
        <name>GTP</name>
        <dbReference type="ChEBI" id="CHEBI:37565"/>
        <label>1</label>
    </ligand>
</feature>
<feature type="binding site" evidence="1">
    <location>
        <begin position="228"/>
        <end position="235"/>
    </location>
    <ligand>
        <name>GTP</name>
        <dbReference type="ChEBI" id="CHEBI:37565"/>
        <label>2</label>
    </ligand>
</feature>
<feature type="binding site" evidence="1">
    <location>
        <begin position="275"/>
        <end position="279"/>
    </location>
    <ligand>
        <name>GTP</name>
        <dbReference type="ChEBI" id="CHEBI:37565"/>
        <label>2</label>
    </ligand>
</feature>
<feature type="binding site" evidence="1">
    <location>
        <begin position="340"/>
        <end position="343"/>
    </location>
    <ligand>
        <name>GTP</name>
        <dbReference type="ChEBI" id="CHEBI:37565"/>
        <label>2</label>
    </ligand>
</feature>
<gene>
    <name evidence="1" type="primary">der</name>
    <name type="synonym">engA</name>
    <name type="ordered locus">PM0105</name>
</gene>
<name>DER_PASMU</name>
<organism>
    <name type="scientific">Pasteurella multocida (strain Pm70)</name>
    <dbReference type="NCBI Taxonomy" id="272843"/>
    <lineage>
        <taxon>Bacteria</taxon>
        <taxon>Pseudomonadati</taxon>
        <taxon>Pseudomonadota</taxon>
        <taxon>Gammaproteobacteria</taxon>
        <taxon>Pasteurellales</taxon>
        <taxon>Pasteurellaceae</taxon>
        <taxon>Pasteurella</taxon>
    </lineage>
</organism>
<proteinExistence type="inferred from homology"/>
<comment type="function">
    <text evidence="1">GTPase that plays an essential role in the late steps of ribosome biogenesis.</text>
</comment>
<comment type="subunit">
    <text evidence="1">Associates with the 50S ribosomal subunit.</text>
</comment>
<comment type="similarity">
    <text evidence="1">Belongs to the TRAFAC class TrmE-Era-EngA-EngB-Septin-like GTPase superfamily. EngA (Der) GTPase family.</text>
</comment>
<accession>P57812</accession>
<keyword id="KW-0342">GTP-binding</keyword>
<keyword id="KW-0547">Nucleotide-binding</keyword>
<keyword id="KW-1185">Reference proteome</keyword>
<keyword id="KW-0677">Repeat</keyword>
<keyword id="KW-0690">Ribosome biogenesis</keyword>
<sequence length="510" mass="56648">MTTPVVALVGRPNVGKSTLFNRLTRTRDALVADFPGLTRDRKYGQANIAGYDFIVIDTGGIDGTEEGVEEKMAEQSLLAIEEADVVLFLVDARAGLTSADIGIANYLRQRQNKITVVVANKTDGIDADSHCAEFYQLGLGEVEQIAASQGRGVSALMEQVLAPIAEKMNAESPEQSAVENTDVSETGEQDEWDHDFDFANEEDTALLDDAIAEELEAQDKNIKIAIVGRPNVGKSTLTNRILGEDRVVVYDLPGTTRDSIYIPMERDGQHYTIIDTAGVRKRGKVHLAVEKFSVIKTLQAIQDANVVLLTIDAREGVSDQDLSLLGFILNAGRSLVIVVNKWDGLNQDIKDQVKSELDRRLDFIDFARVHFISALHGSGVGNLFDSIQEAYACATQKMTTSMLTRILQMATDEHQPPMMGGRRIKLKYAHPGGYNPPIIVVHGNQMDKLPDSYKRYLSNYYRRSLKIIGSPIRLLFQEGNNPFAGKRNKLTPNQLRKRKRLMKFIKKSKR</sequence>
<dbReference type="EMBL" id="AE004439">
    <property type="protein sequence ID" value="AAK02189.1"/>
    <property type="molecule type" value="Genomic_DNA"/>
</dbReference>
<dbReference type="RefSeq" id="WP_010906484.1">
    <property type="nucleotide sequence ID" value="NC_002663.1"/>
</dbReference>
<dbReference type="SMR" id="P57812"/>
<dbReference type="STRING" id="272843.PM0105"/>
<dbReference type="EnsemblBacteria" id="AAK02189">
    <property type="protein sequence ID" value="AAK02189"/>
    <property type="gene ID" value="PM0105"/>
</dbReference>
<dbReference type="KEGG" id="pmu:PM0105"/>
<dbReference type="PATRIC" id="fig|272843.6.peg.109"/>
<dbReference type="HOGENOM" id="CLU_016077_5_1_6"/>
<dbReference type="OrthoDB" id="9805918at2"/>
<dbReference type="Proteomes" id="UP000000809">
    <property type="component" value="Chromosome"/>
</dbReference>
<dbReference type="GO" id="GO:0016887">
    <property type="term" value="F:ATP hydrolysis activity"/>
    <property type="evidence" value="ECO:0007669"/>
    <property type="project" value="InterPro"/>
</dbReference>
<dbReference type="GO" id="GO:0005525">
    <property type="term" value="F:GTP binding"/>
    <property type="evidence" value="ECO:0007669"/>
    <property type="project" value="UniProtKB-UniRule"/>
</dbReference>
<dbReference type="GO" id="GO:0043022">
    <property type="term" value="F:ribosome binding"/>
    <property type="evidence" value="ECO:0007669"/>
    <property type="project" value="TreeGrafter"/>
</dbReference>
<dbReference type="GO" id="GO:0042254">
    <property type="term" value="P:ribosome biogenesis"/>
    <property type="evidence" value="ECO:0007669"/>
    <property type="project" value="UniProtKB-KW"/>
</dbReference>
<dbReference type="CDD" id="cd01894">
    <property type="entry name" value="EngA1"/>
    <property type="match status" value="1"/>
</dbReference>
<dbReference type="CDD" id="cd01895">
    <property type="entry name" value="EngA2"/>
    <property type="match status" value="1"/>
</dbReference>
<dbReference type="FunFam" id="3.30.300.20:FF:000004">
    <property type="entry name" value="GTPase Der"/>
    <property type="match status" value="1"/>
</dbReference>
<dbReference type="FunFam" id="3.40.50.300:FF:000040">
    <property type="entry name" value="GTPase Der"/>
    <property type="match status" value="1"/>
</dbReference>
<dbReference type="FunFam" id="3.40.50.300:FF:000057">
    <property type="entry name" value="GTPase Der"/>
    <property type="match status" value="1"/>
</dbReference>
<dbReference type="Gene3D" id="3.30.300.20">
    <property type="match status" value="1"/>
</dbReference>
<dbReference type="Gene3D" id="3.40.50.300">
    <property type="entry name" value="P-loop containing nucleotide triphosphate hydrolases"/>
    <property type="match status" value="2"/>
</dbReference>
<dbReference type="HAMAP" id="MF_00195">
    <property type="entry name" value="GTPase_Der"/>
    <property type="match status" value="1"/>
</dbReference>
<dbReference type="InterPro" id="IPR003593">
    <property type="entry name" value="AAA+_ATPase"/>
</dbReference>
<dbReference type="InterPro" id="IPR031166">
    <property type="entry name" value="G_ENGA"/>
</dbReference>
<dbReference type="InterPro" id="IPR006073">
    <property type="entry name" value="GTP-bd"/>
</dbReference>
<dbReference type="InterPro" id="IPR016484">
    <property type="entry name" value="GTPase_Der"/>
</dbReference>
<dbReference type="InterPro" id="IPR032859">
    <property type="entry name" value="KH_dom-like"/>
</dbReference>
<dbReference type="InterPro" id="IPR015946">
    <property type="entry name" value="KH_dom-like_a/b"/>
</dbReference>
<dbReference type="InterPro" id="IPR027417">
    <property type="entry name" value="P-loop_NTPase"/>
</dbReference>
<dbReference type="InterPro" id="IPR005225">
    <property type="entry name" value="Small_GTP-bd"/>
</dbReference>
<dbReference type="NCBIfam" id="TIGR03594">
    <property type="entry name" value="GTPase_EngA"/>
    <property type="match status" value="1"/>
</dbReference>
<dbReference type="NCBIfam" id="TIGR00231">
    <property type="entry name" value="small_GTP"/>
    <property type="match status" value="2"/>
</dbReference>
<dbReference type="PANTHER" id="PTHR43834">
    <property type="entry name" value="GTPASE DER"/>
    <property type="match status" value="1"/>
</dbReference>
<dbReference type="PANTHER" id="PTHR43834:SF6">
    <property type="entry name" value="GTPASE DER"/>
    <property type="match status" value="1"/>
</dbReference>
<dbReference type="Pfam" id="PF14714">
    <property type="entry name" value="KH_dom-like"/>
    <property type="match status" value="1"/>
</dbReference>
<dbReference type="Pfam" id="PF01926">
    <property type="entry name" value="MMR_HSR1"/>
    <property type="match status" value="2"/>
</dbReference>
<dbReference type="PIRSF" id="PIRSF006485">
    <property type="entry name" value="GTP-binding_EngA"/>
    <property type="match status" value="1"/>
</dbReference>
<dbReference type="PRINTS" id="PR00326">
    <property type="entry name" value="GTP1OBG"/>
</dbReference>
<dbReference type="SMART" id="SM00382">
    <property type="entry name" value="AAA"/>
    <property type="match status" value="2"/>
</dbReference>
<dbReference type="SUPFAM" id="SSF52540">
    <property type="entry name" value="P-loop containing nucleoside triphosphate hydrolases"/>
    <property type="match status" value="2"/>
</dbReference>
<dbReference type="PROSITE" id="PS51712">
    <property type="entry name" value="G_ENGA"/>
    <property type="match status" value="2"/>
</dbReference>
<protein>
    <recommendedName>
        <fullName evidence="1">GTPase Der</fullName>
    </recommendedName>
    <alternativeName>
        <fullName evidence="1">GTP-binding protein EngA</fullName>
    </alternativeName>
</protein>
<reference key="1">
    <citation type="journal article" date="2001" name="Proc. Natl. Acad. Sci. U.S.A.">
        <title>Complete genomic sequence of Pasteurella multocida Pm70.</title>
        <authorList>
            <person name="May B.J."/>
            <person name="Zhang Q."/>
            <person name="Li L.L."/>
            <person name="Paustian M.L."/>
            <person name="Whittam T.S."/>
            <person name="Kapur V."/>
        </authorList>
    </citation>
    <scope>NUCLEOTIDE SEQUENCE [LARGE SCALE GENOMIC DNA]</scope>
    <source>
        <strain>Pm70</strain>
    </source>
</reference>